<organism>
    <name type="scientific">Syntrophotalea carbinolica (strain DSM 2380 / NBRC 103641 / GraBd1)</name>
    <name type="common">Pelobacter carbinolicus</name>
    <dbReference type="NCBI Taxonomy" id="338963"/>
    <lineage>
        <taxon>Bacteria</taxon>
        <taxon>Pseudomonadati</taxon>
        <taxon>Thermodesulfobacteriota</taxon>
        <taxon>Desulfuromonadia</taxon>
        <taxon>Desulfuromonadales</taxon>
        <taxon>Syntrophotaleaceae</taxon>
        <taxon>Syntrophotalea</taxon>
    </lineage>
</organism>
<keyword id="KW-0050">Antiport</keyword>
<keyword id="KW-0997">Cell inner membrane</keyword>
<keyword id="KW-1003">Cell membrane</keyword>
<keyword id="KW-0406">Ion transport</keyword>
<keyword id="KW-0472">Membrane</keyword>
<keyword id="KW-1185">Reference proteome</keyword>
<keyword id="KW-0915">Sodium</keyword>
<keyword id="KW-0739">Sodium transport</keyword>
<keyword id="KW-0812">Transmembrane</keyword>
<keyword id="KW-1133">Transmembrane helix</keyword>
<keyword id="KW-0813">Transport</keyword>
<dbReference type="EMBL" id="CP000142">
    <property type="protein sequence ID" value="ABA88636.1"/>
    <property type="molecule type" value="Genomic_DNA"/>
</dbReference>
<dbReference type="RefSeq" id="WP_011341118.1">
    <property type="nucleotide sequence ID" value="NC_007498.2"/>
</dbReference>
<dbReference type="SMR" id="Q3A4S1"/>
<dbReference type="STRING" id="338963.Pcar_1390"/>
<dbReference type="KEGG" id="pca:Pcar_1390"/>
<dbReference type="eggNOG" id="COG3004">
    <property type="taxonomic scope" value="Bacteria"/>
</dbReference>
<dbReference type="HOGENOM" id="CLU_015803_1_0_7"/>
<dbReference type="OrthoDB" id="9808135at2"/>
<dbReference type="Proteomes" id="UP000002534">
    <property type="component" value="Chromosome"/>
</dbReference>
<dbReference type="GO" id="GO:0005886">
    <property type="term" value="C:plasma membrane"/>
    <property type="evidence" value="ECO:0007669"/>
    <property type="project" value="UniProtKB-SubCell"/>
</dbReference>
<dbReference type="GO" id="GO:0015385">
    <property type="term" value="F:sodium:proton antiporter activity"/>
    <property type="evidence" value="ECO:0007669"/>
    <property type="project" value="TreeGrafter"/>
</dbReference>
<dbReference type="GO" id="GO:0006885">
    <property type="term" value="P:regulation of pH"/>
    <property type="evidence" value="ECO:0007669"/>
    <property type="project" value="InterPro"/>
</dbReference>
<dbReference type="Gene3D" id="1.20.1530.10">
    <property type="entry name" value="Na+/H+ antiporter like domain"/>
    <property type="match status" value="1"/>
</dbReference>
<dbReference type="HAMAP" id="MF_01844">
    <property type="entry name" value="NhaA"/>
    <property type="match status" value="1"/>
</dbReference>
<dbReference type="InterPro" id="IPR023171">
    <property type="entry name" value="Na/H_antiporter_dom_sf"/>
</dbReference>
<dbReference type="InterPro" id="IPR004670">
    <property type="entry name" value="NhaA"/>
</dbReference>
<dbReference type="NCBIfam" id="TIGR00773">
    <property type="entry name" value="NhaA"/>
    <property type="match status" value="1"/>
</dbReference>
<dbReference type="NCBIfam" id="NF007111">
    <property type="entry name" value="PRK09560.1"/>
    <property type="match status" value="1"/>
</dbReference>
<dbReference type="NCBIfam" id="NF007112">
    <property type="entry name" value="PRK09561.1"/>
    <property type="match status" value="1"/>
</dbReference>
<dbReference type="PANTHER" id="PTHR30341:SF0">
    <property type="entry name" value="NA(+)_H(+) ANTIPORTER NHAA"/>
    <property type="match status" value="1"/>
</dbReference>
<dbReference type="PANTHER" id="PTHR30341">
    <property type="entry name" value="SODIUM ION/PROTON ANTIPORTER NHAA-RELATED"/>
    <property type="match status" value="1"/>
</dbReference>
<dbReference type="Pfam" id="PF06965">
    <property type="entry name" value="Na_H_antiport_1"/>
    <property type="match status" value="1"/>
</dbReference>
<evidence type="ECO:0000255" key="1">
    <source>
        <dbReference type="HAMAP-Rule" id="MF_01844"/>
    </source>
</evidence>
<comment type="function">
    <text evidence="1">Na(+)/H(+) antiporter that extrudes sodium in exchange for external protons.</text>
</comment>
<comment type="catalytic activity">
    <reaction evidence="1">
        <text>Na(+)(in) + 2 H(+)(out) = Na(+)(out) + 2 H(+)(in)</text>
        <dbReference type="Rhea" id="RHEA:29251"/>
        <dbReference type="ChEBI" id="CHEBI:15378"/>
        <dbReference type="ChEBI" id="CHEBI:29101"/>
    </reaction>
    <physiologicalReaction direction="left-to-right" evidence="1">
        <dbReference type="Rhea" id="RHEA:29252"/>
    </physiologicalReaction>
</comment>
<comment type="subcellular location">
    <subcellularLocation>
        <location evidence="1">Cell inner membrane</location>
        <topology evidence="1">Multi-pass membrane protein</topology>
    </subcellularLocation>
</comment>
<comment type="similarity">
    <text evidence="1">Belongs to the NhaA Na(+)/H(+) (TC 2.A.33) antiporter family.</text>
</comment>
<accession>Q3A4S1</accession>
<reference key="1">
    <citation type="submission" date="2005-10" db="EMBL/GenBank/DDBJ databases">
        <title>Complete sequence of Pelobacter carbinolicus DSM 2380.</title>
        <authorList>
            <person name="Copeland A."/>
            <person name="Lucas S."/>
            <person name="Lapidus A."/>
            <person name="Barry K."/>
            <person name="Detter J.C."/>
            <person name="Glavina T."/>
            <person name="Hammon N."/>
            <person name="Israni S."/>
            <person name="Pitluck S."/>
            <person name="Chertkov O."/>
            <person name="Schmutz J."/>
            <person name="Larimer F."/>
            <person name="Land M."/>
            <person name="Kyrpides N."/>
            <person name="Ivanova N."/>
            <person name="Richardson P."/>
        </authorList>
    </citation>
    <scope>NUCLEOTIDE SEQUENCE [LARGE SCALE GENOMIC DNA]</scope>
    <source>
        <strain>DSM 2380 / NBRC 103641 / GraBd1</strain>
    </source>
</reference>
<sequence length="396" mass="42092">MTVQTIRDFLKLESASGLLLIGAMLLAVLCANTPLSWLYDGFLQTRFEIHFGALSLAKPLLLWINDGLMAIFFLLVGLEVKREILEGELSSLPQIALPGIAAVGGMLVPALIYTGINWSAPATLQGWAIPAATDIAFALGVIALLGKNVPGPLKLFLLTLAILDDLGAIVIIALFYTADLSVLSLVLAMIAVAGLFILNRTGVTHIAAYVLLGVFLWICVLKSGVHATLAGVVLAFAIPLRTKDQDGHSLLRHLEHTLHPWVAYGILPIFAFANAGVSLAGISFTDVFSPLPLGIAAGLFVGKQFGIVVFSWIGVKLRMARLPQGVSWGEFHGMAVLCGIGFTMSLFIATLALDGSQETADAARLGVLLGSLMSALSGYYLLKRAVRKRALRAEAP</sequence>
<feature type="chain" id="PRO_0000334357" description="Na(+)/H(+) antiporter NhaA 1">
    <location>
        <begin position="1"/>
        <end position="396"/>
    </location>
</feature>
<feature type="transmembrane region" description="Helical" evidence="1">
    <location>
        <begin position="18"/>
        <end position="38"/>
    </location>
</feature>
<feature type="transmembrane region" description="Helical" evidence="1">
    <location>
        <begin position="60"/>
        <end position="80"/>
    </location>
</feature>
<feature type="transmembrane region" description="Helical" evidence="1">
    <location>
        <begin position="95"/>
        <end position="115"/>
    </location>
</feature>
<feature type="transmembrane region" description="Helical" evidence="1">
    <location>
        <begin position="126"/>
        <end position="146"/>
    </location>
</feature>
<feature type="transmembrane region" description="Helical" evidence="1">
    <location>
        <begin position="155"/>
        <end position="175"/>
    </location>
</feature>
<feature type="transmembrane region" description="Helical" evidence="1">
    <location>
        <begin position="178"/>
        <end position="198"/>
    </location>
</feature>
<feature type="transmembrane region" description="Helical" evidence="1">
    <location>
        <begin position="201"/>
        <end position="221"/>
    </location>
</feature>
<feature type="transmembrane region" description="Helical" evidence="1">
    <location>
        <begin position="262"/>
        <end position="282"/>
    </location>
</feature>
<feature type="transmembrane region" description="Helical" evidence="1">
    <location>
        <begin position="295"/>
        <end position="315"/>
    </location>
</feature>
<feature type="transmembrane region" description="Helical" evidence="1">
    <location>
        <begin position="333"/>
        <end position="353"/>
    </location>
</feature>
<feature type="transmembrane region" description="Helical" evidence="1">
    <location>
        <begin position="362"/>
        <end position="382"/>
    </location>
</feature>
<name>NHAA1_SYNC1</name>
<gene>
    <name evidence="1" type="primary">nhaA1</name>
    <name type="ordered locus">Pcar_1390</name>
</gene>
<protein>
    <recommendedName>
        <fullName evidence="1">Na(+)/H(+) antiporter NhaA 1</fullName>
    </recommendedName>
    <alternativeName>
        <fullName evidence="1">Sodium/proton antiporter NhaA 1</fullName>
    </alternativeName>
</protein>
<proteinExistence type="inferred from homology"/>